<dbReference type="EC" id="3.1.-.-" evidence="1"/>
<dbReference type="EMBL" id="CP000854">
    <property type="protein sequence ID" value="ACC42484.1"/>
    <property type="molecule type" value="Genomic_DNA"/>
</dbReference>
<dbReference type="RefSeq" id="WP_012395662.1">
    <property type="nucleotide sequence ID" value="NC_010612.1"/>
</dbReference>
<dbReference type="SMR" id="B2HQJ2"/>
<dbReference type="STRING" id="216594.MMAR_4077"/>
<dbReference type="GeneID" id="34341469"/>
<dbReference type="KEGG" id="mmi:MMAR_4077"/>
<dbReference type="eggNOG" id="COG1637">
    <property type="taxonomic scope" value="Bacteria"/>
</dbReference>
<dbReference type="HOGENOM" id="CLU_069350_0_0_11"/>
<dbReference type="OrthoDB" id="3344925at2"/>
<dbReference type="Proteomes" id="UP000001190">
    <property type="component" value="Chromosome"/>
</dbReference>
<dbReference type="GO" id="GO:0005737">
    <property type="term" value="C:cytoplasm"/>
    <property type="evidence" value="ECO:0007669"/>
    <property type="project" value="UniProtKB-SubCell"/>
</dbReference>
<dbReference type="GO" id="GO:0003677">
    <property type="term" value="F:DNA binding"/>
    <property type="evidence" value="ECO:0007669"/>
    <property type="project" value="UniProtKB-KW"/>
</dbReference>
<dbReference type="GO" id="GO:0000014">
    <property type="term" value="F:single-stranded DNA endodeoxyribonuclease activity"/>
    <property type="evidence" value="ECO:0007669"/>
    <property type="project" value="UniProtKB-UniRule"/>
</dbReference>
<dbReference type="CDD" id="cd22341">
    <property type="entry name" value="NucS-like"/>
    <property type="match status" value="1"/>
</dbReference>
<dbReference type="Gene3D" id="2.70.180.20">
    <property type="match status" value="1"/>
</dbReference>
<dbReference type="Gene3D" id="3.40.1350.10">
    <property type="match status" value="1"/>
</dbReference>
<dbReference type="HAMAP" id="MF_00722">
    <property type="entry name" value="NucS"/>
    <property type="match status" value="1"/>
</dbReference>
<dbReference type="InterPro" id="IPR002793">
    <property type="entry name" value="Endonuclease_NucS"/>
</dbReference>
<dbReference type="InterPro" id="IPR048301">
    <property type="entry name" value="NucS_C"/>
</dbReference>
<dbReference type="InterPro" id="IPR048302">
    <property type="entry name" value="NucS_N"/>
</dbReference>
<dbReference type="InterPro" id="IPR049173">
    <property type="entry name" value="NucS_N_sf"/>
</dbReference>
<dbReference type="InterPro" id="IPR011856">
    <property type="entry name" value="tRNA_endonuc-like_dom_sf"/>
</dbReference>
<dbReference type="NCBIfam" id="NF002876">
    <property type="entry name" value="PRK03298.1"/>
    <property type="match status" value="1"/>
</dbReference>
<dbReference type="PANTHER" id="PTHR38814">
    <property type="entry name" value="ENDONUCLEASE NUCS"/>
    <property type="match status" value="1"/>
</dbReference>
<dbReference type="PANTHER" id="PTHR38814:SF1">
    <property type="entry name" value="ENDONUCLEASE NUCS"/>
    <property type="match status" value="1"/>
</dbReference>
<dbReference type="Pfam" id="PF01939">
    <property type="entry name" value="NucS_C"/>
    <property type="match status" value="1"/>
</dbReference>
<dbReference type="Pfam" id="PF21003">
    <property type="entry name" value="NucS_N"/>
    <property type="match status" value="1"/>
</dbReference>
<gene>
    <name evidence="1" type="primary">nucS</name>
    <name type="ordered locus">MMAR_4077</name>
</gene>
<evidence type="ECO:0000255" key="1">
    <source>
        <dbReference type="HAMAP-Rule" id="MF_00722"/>
    </source>
</evidence>
<organism>
    <name type="scientific">Mycobacterium marinum (strain ATCC BAA-535 / M)</name>
    <dbReference type="NCBI Taxonomy" id="216594"/>
    <lineage>
        <taxon>Bacteria</taxon>
        <taxon>Bacillati</taxon>
        <taxon>Actinomycetota</taxon>
        <taxon>Actinomycetes</taxon>
        <taxon>Mycobacteriales</taxon>
        <taxon>Mycobacteriaceae</taxon>
        <taxon>Mycobacterium</taxon>
        <taxon>Mycobacterium ulcerans group</taxon>
    </lineage>
</organism>
<comment type="function">
    <text evidence="1">Cleaves both 3' and 5' ssDNA extremities of branched DNA structures.</text>
</comment>
<comment type="subcellular location">
    <subcellularLocation>
        <location evidence="1">Cytoplasm</location>
    </subcellularLocation>
</comment>
<comment type="similarity">
    <text evidence="1">Belongs to the NucS endonuclease family.</text>
</comment>
<protein>
    <recommendedName>
        <fullName evidence="1">Endonuclease NucS</fullName>
        <ecNumber evidence="1">3.1.-.-</ecNumber>
    </recommendedName>
</protein>
<keyword id="KW-0963">Cytoplasm</keyword>
<keyword id="KW-0238">DNA-binding</keyword>
<keyword id="KW-0255">Endonuclease</keyword>
<keyword id="KW-0378">Hydrolase</keyword>
<keyword id="KW-0540">Nuclease</keyword>
<keyword id="KW-1185">Reference proteome</keyword>
<accession>B2HQJ2</accession>
<reference key="1">
    <citation type="journal article" date="2008" name="Genome Res.">
        <title>Insights from the complete genome sequence of Mycobacterium marinum on the evolution of Mycobacterium tuberculosis.</title>
        <authorList>
            <person name="Stinear T.P."/>
            <person name="Seemann T."/>
            <person name="Harrison P.F."/>
            <person name="Jenkin G.A."/>
            <person name="Davies J.K."/>
            <person name="Johnson P.D."/>
            <person name="Abdellah Z."/>
            <person name="Arrowsmith C."/>
            <person name="Chillingworth T."/>
            <person name="Churcher C."/>
            <person name="Clarke K."/>
            <person name="Cronin A."/>
            <person name="Davis P."/>
            <person name="Goodhead I."/>
            <person name="Holroyd N."/>
            <person name="Jagels K."/>
            <person name="Lord A."/>
            <person name="Moule S."/>
            <person name="Mungall K."/>
            <person name="Norbertczak H."/>
            <person name="Quail M.A."/>
            <person name="Rabbinowitsch E."/>
            <person name="Walker D."/>
            <person name="White B."/>
            <person name="Whitehead S."/>
            <person name="Small P.L."/>
            <person name="Brosch R."/>
            <person name="Ramakrishnan L."/>
            <person name="Fischbach M.A."/>
            <person name="Parkhill J."/>
            <person name="Cole S.T."/>
        </authorList>
    </citation>
    <scope>NUCLEOTIDE SEQUENCE [LARGE SCALE GENOMIC DNA]</scope>
    <source>
        <strain>ATCC BAA-535 / M</strain>
    </source>
</reference>
<sequence length="223" mass="24809">MRLVIAQCTVDYVGRLTAHLPSARRLLLFKADGSVSVHADDRAYKPLNWMSPPCWLTEEPGGDSPVWVVTNKGGEQLRISVEEIEHDSSHELGVDPGLVKDGVEAHLQVLLAEHVQLLGEGYTLVRREYMTAIGPVDLLCRDESGGAVAVEIKRRGEIDGVEQLTRYLELLNRDSVLAPVKGVFAAQQIKPQARTLATDRGIRCVTLDYDKMRGMDSDEYRLF</sequence>
<name>NUCS_MYCMM</name>
<feature type="chain" id="PRO_1000198202" description="Endonuclease NucS">
    <location>
        <begin position="1"/>
        <end position="223"/>
    </location>
</feature>
<proteinExistence type="inferred from homology"/>